<evidence type="ECO:0000250" key="1">
    <source>
        <dbReference type="UniProtKB" id="H2A7G5"/>
    </source>
</evidence>
<evidence type="ECO:0000250" key="2">
    <source>
        <dbReference type="UniProtKB" id="Q7V8T1"/>
    </source>
</evidence>
<evidence type="ECO:0000269" key="3">
    <source>
    </source>
</evidence>
<evidence type="ECO:0000269" key="4">
    <source>
    </source>
</evidence>
<evidence type="ECO:0000303" key="5">
    <source>
    </source>
</evidence>
<evidence type="ECO:0000303" key="6">
    <source>
    </source>
</evidence>
<evidence type="ECO:0000305" key="7"/>
<evidence type="ECO:0000305" key="8">
    <source>
    </source>
</evidence>
<evidence type="ECO:0000305" key="9">
    <source>
    </source>
</evidence>
<evidence type="ECO:0000312" key="10">
    <source>
        <dbReference type="EMBL" id="CAE21007.1"/>
    </source>
</evidence>
<dbReference type="EMBL" id="BX548175">
    <property type="protein sequence ID" value="CAE21007.1"/>
    <property type="molecule type" value="Genomic_DNA"/>
</dbReference>
<dbReference type="RefSeq" id="WP_011130210.1">
    <property type="nucleotide sequence ID" value="NC_005071.1"/>
</dbReference>
<dbReference type="SMR" id="Q7V7B7"/>
<dbReference type="KEGG" id="pmt:PMT_0832"/>
<dbReference type="HOGENOM" id="CLU_158613_2_0_3"/>
<dbReference type="OrthoDB" id="542288at2"/>
<dbReference type="Proteomes" id="UP000001423">
    <property type="component" value="Chromosome"/>
</dbReference>
<dbReference type="GO" id="GO:0005576">
    <property type="term" value="C:extracellular region"/>
    <property type="evidence" value="ECO:0007669"/>
    <property type="project" value="UniProtKB-SubCell"/>
</dbReference>
<dbReference type="InterPro" id="IPR022516">
    <property type="entry name" value="CHP03798_Ocin"/>
</dbReference>
<dbReference type="InterPro" id="IPR012903">
    <property type="entry name" value="Nif11"/>
</dbReference>
<dbReference type="NCBIfam" id="TIGR03798">
    <property type="entry name" value="leader_Nif11"/>
    <property type="match status" value="1"/>
</dbReference>
<dbReference type="Pfam" id="PF07862">
    <property type="entry name" value="Nif11"/>
    <property type="match status" value="1"/>
</dbReference>
<sequence length="87" mass="8902">MSEEQLKAFIAKVQGDSSLQEQLKAEGADVVAIAKAAGFTIKQQDLNAAASELSDEELEAASGGGDTGIQAVLHTAGCYGGTKMCRA</sequence>
<keyword id="KW-1185">Reference proteome</keyword>
<keyword id="KW-0964">Secreted</keyword>
<keyword id="KW-0883">Thioether bond</keyword>
<protein>
    <recommendedName>
        <fullName evidence="5 6">Lantipeptide prochlorosin 3.3</fullName>
        <shortName evidence="5 6">Lantipeptide Pcn3.3</shortName>
    </recommendedName>
</protein>
<gene>
    <name evidence="5 6" type="primary">ProcA3.3</name>
    <name evidence="10" type="ordered locus">PMT_0832</name>
</gene>
<name>LAN33_PROMM</name>
<reference key="1">
    <citation type="journal article" date="2003" name="Nature">
        <title>Genome divergence in two Prochlorococcus ecotypes reflects oceanic niche differentiation.</title>
        <authorList>
            <person name="Rocap G."/>
            <person name="Larimer F.W."/>
            <person name="Lamerdin J.E."/>
            <person name="Malfatti S."/>
            <person name="Chain P."/>
            <person name="Ahlgren N.A."/>
            <person name="Arellano A."/>
            <person name="Coleman M."/>
            <person name="Hauser L."/>
            <person name="Hess W.R."/>
            <person name="Johnson Z.I."/>
            <person name="Land M.L."/>
            <person name="Lindell D."/>
            <person name="Post A.F."/>
            <person name="Regala W."/>
            <person name="Shah M."/>
            <person name="Shaw S.L."/>
            <person name="Steglich C."/>
            <person name="Sullivan M.B."/>
            <person name="Ting C.S."/>
            <person name="Tolonen A."/>
            <person name="Webb E.A."/>
            <person name="Zinser E.R."/>
            <person name="Chisholm S.W."/>
        </authorList>
    </citation>
    <scope>NUCLEOTIDE SEQUENCE [LARGE SCALE GENOMIC DNA]</scope>
    <source>
        <strain>MIT 9313</strain>
    </source>
</reference>
<reference key="2">
    <citation type="journal article" date="2010" name="Proc. Natl. Acad. Sci. U.S.A.">
        <title>Catalytic promiscuity in the biosynthesis of cyclic peptide secondary metabolites in planktonic marine cyanobacteria.</title>
        <authorList>
            <person name="Li B."/>
            <person name="Sher D."/>
            <person name="Kelly L."/>
            <person name="Shi Y."/>
            <person name="Huang K."/>
            <person name="Knerr P.J."/>
            <person name="Joewono I."/>
            <person name="Rusch D."/>
            <person name="Chisholm S.W."/>
            <person name="van der Donk W.A."/>
        </authorList>
    </citation>
    <scope>PRELIMINARY LANTHIONINE CROSS-LINKS</scope>
    <scope>DEHYDRATION AT THR-67</scope>
    <scope>INDUCTION BY NITROGEN STARVATION</scope>
    <source>
        <strain>MIT 9313</strain>
    </source>
</reference>
<reference key="3">
    <citation type="journal article" date="2012" name="Biochemistry">
        <title>Structural characterization of four prochlorosins: a novel class of lantipeptides produced by planktonic marine cyanobacteria.</title>
        <authorList>
            <person name="Tang W."/>
            <person name="van der Donk W.A."/>
        </authorList>
    </citation>
    <scope>STRUCTURE BY NMR OF 65-87</scope>
    <scope>DEHYDRATION AT THR-67</scope>
    <scope>LANTHIONINE CROSS-LINKS</scope>
    <scope>EXPRESSION IN E.COLI</scope>
    <source>
        <strain>MIT 9313</strain>
    </source>
</reference>
<comment type="function">
    <text evidence="2 7 8 9">Lanthionine-containing peptide (lantipeptide) with unknown function (Probable). Does not show antibiotic activity against Lactococcus lactis 117 and Bacillus subtilis 6633 bacteria (By similarity). Organisms that produce this peptide live in oligotrophic environments at very dilute concentrations, suggesting this peptide is not secreted to influence other bacteria (Probable).</text>
</comment>
<comment type="subcellular location">
    <subcellularLocation>
        <location evidence="7">Secreted</location>
    </subcellularLocation>
</comment>
<comment type="induction">
    <text evidence="3">Down-regulated under nitrogen starvation.</text>
</comment>
<comment type="PTM">
    <text evidence="4">Cross-links are proved in vitro, when coepressed in E.coli with the ProcM lanthionine synthetase.</text>
</comment>
<comment type="PTM">
    <text evidence="4">The beta-methyllanthionine residues have a DL configuration (with 2S,3S,6R stereochemistry).</text>
</comment>
<comment type="PTM">
    <text evidence="1 9">Maturation of prochlorosin involves the enzymatic conversion of Thr, and Ser into dehydrated AA and the formation of thioether bonds with cysteines. This is followed by membrane translocation and cleavage of the modified precursor.</text>
</comment>
<organism>
    <name type="scientific">Prochlorococcus marinus (strain MIT 9313)</name>
    <dbReference type="NCBI Taxonomy" id="74547"/>
    <lineage>
        <taxon>Bacteria</taxon>
        <taxon>Bacillati</taxon>
        <taxon>Cyanobacteriota</taxon>
        <taxon>Cyanophyceae</taxon>
        <taxon>Synechococcales</taxon>
        <taxon>Prochlorococcaceae</taxon>
        <taxon>Prochlorococcus</taxon>
    </lineage>
</organism>
<proteinExistence type="evidence at protein level"/>
<accession>Q7V7B7</accession>
<feature type="propeptide" id="PRO_0000450375" evidence="8 9">
    <location>
        <begin position="1"/>
        <end position="64"/>
    </location>
</feature>
<feature type="peptide" id="PRO_0000450376" description="Lantipeptide prochlorosin 3.3" evidence="8 9">
    <location>
        <begin position="65"/>
        <end position="87"/>
    </location>
</feature>
<feature type="modified residue" description="2,3-didehydrobutyrine" evidence="3 4">
    <location>
        <position position="67"/>
    </location>
</feature>
<feature type="cross-link" description="Beta-methyllanthionine (Thr-Cys)" evidence="4 8">
    <location>
        <begin position="75"/>
        <end position="85"/>
    </location>
</feature>
<feature type="cross-link" description="Beta-methyllanthionine (Cys-Thr)" evidence="4 8">
    <location>
        <begin position="78"/>
        <end position="82"/>
    </location>
</feature>